<gene>
    <name evidence="1" type="primary">panD</name>
    <name type="ordered locus">H16_A3129</name>
</gene>
<comment type="function">
    <text evidence="1">Catalyzes the pyruvoyl-dependent decarboxylation of aspartate to produce beta-alanine.</text>
</comment>
<comment type="catalytic activity">
    <reaction evidence="1">
        <text>L-aspartate + H(+) = beta-alanine + CO2</text>
        <dbReference type="Rhea" id="RHEA:19497"/>
        <dbReference type="ChEBI" id="CHEBI:15378"/>
        <dbReference type="ChEBI" id="CHEBI:16526"/>
        <dbReference type="ChEBI" id="CHEBI:29991"/>
        <dbReference type="ChEBI" id="CHEBI:57966"/>
        <dbReference type="EC" id="4.1.1.11"/>
    </reaction>
</comment>
<comment type="cofactor">
    <cofactor evidence="1">
        <name>pyruvate</name>
        <dbReference type="ChEBI" id="CHEBI:15361"/>
    </cofactor>
    <text evidence="1">Binds 1 pyruvoyl group covalently per subunit.</text>
</comment>
<comment type="pathway">
    <text evidence="1">Cofactor biosynthesis; (R)-pantothenate biosynthesis; beta-alanine from L-aspartate: step 1/1.</text>
</comment>
<comment type="subunit">
    <text evidence="1">Heterooctamer of four alpha and four beta subunits.</text>
</comment>
<comment type="subcellular location">
    <subcellularLocation>
        <location evidence="1">Cytoplasm</location>
    </subcellularLocation>
</comment>
<comment type="PTM">
    <text evidence="1">Is synthesized initially as an inactive proenzyme, which is activated by self-cleavage at a specific serine bond to produce a beta-subunit with a hydroxyl group at its C-terminus and an alpha-subunit with a pyruvoyl group at its N-terminus.</text>
</comment>
<comment type="similarity">
    <text evidence="1">Belongs to the PanD family.</text>
</comment>
<accession>Q9ZHI5</accession>
<accession>Q0K717</accession>
<proteinExistence type="inferred from homology"/>
<organism>
    <name type="scientific">Cupriavidus necator (strain ATCC 17699 / DSM 428 / KCTC 22496 / NCIMB 10442 / H16 / Stanier 337)</name>
    <name type="common">Ralstonia eutropha</name>
    <dbReference type="NCBI Taxonomy" id="381666"/>
    <lineage>
        <taxon>Bacteria</taxon>
        <taxon>Pseudomonadati</taxon>
        <taxon>Pseudomonadota</taxon>
        <taxon>Betaproteobacteria</taxon>
        <taxon>Burkholderiales</taxon>
        <taxon>Burkholderiaceae</taxon>
        <taxon>Cupriavidus</taxon>
    </lineage>
</organism>
<name>PAND_CUPNH</name>
<sequence>MQRIMLRAKLHRVTVTQADLNYEGSCGIDQDLLDAADMKEFEKIELYNVNNGERFSTYIIKGERGSGEISLNGAAARRAHLGDQLIICTYAPMSDEEIAAYKPKVILVNEKNGIKEIKKF</sequence>
<reference key="1">
    <citation type="journal article" date="1999" name="J. Bacteriol.">
        <title>Analysis of 4-phosphopantetheinylation of polyhydroxybutyrate synthase from Ralstonia eutropha: generation of beta-alanine auxotrophic Tn5 mutants and cloning of the panD gene region.</title>
        <authorList>
            <person name="Hoppensack A."/>
            <person name="Rehm B.H.A."/>
            <person name="Steinbuechel A."/>
        </authorList>
    </citation>
    <scope>NUCLEOTIDE SEQUENCE [GENOMIC DNA]</scope>
</reference>
<reference key="2">
    <citation type="journal article" date="2006" name="Nat. Biotechnol.">
        <title>Genome sequence of the bioplastic-producing 'Knallgas' bacterium Ralstonia eutropha H16.</title>
        <authorList>
            <person name="Pohlmann A."/>
            <person name="Fricke W.F."/>
            <person name="Reinecke F."/>
            <person name="Kusian B."/>
            <person name="Liesegang H."/>
            <person name="Cramm R."/>
            <person name="Eitinger T."/>
            <person name="Ewering C."/>
            <person name="Poetter M."/>
            <person name="Schwartz E."/>
            <person name="Strittmatter A."/>
            <person name="Voss I."/>
            <person name="Gottschalk G."/>
            <person name="Steinbuechel A."/>
            <person name="Friedrich B."/>
            <person name="Bowien B."/>
        </authorList>
    </citation>
    <scope>NUCLEOTIDE SEQUENCE [LARGE SCALE GENOMIC DNA]</scope>
    <source>
        <strain>ATCC 17699 / DSM 428 / KCTC 22496 / NCIMB 10442 / H16 / Stanier 337</strain>
    </source>
</reference>
<dbReference type="EC" id="4.1.1.11" evidence="1"/>
<dbReference type="EMBL" id="AF061246">
    <property type="protein sequence ID" value="AAC67386.1"/>
    <property type="molecule type" value="Genomic_DNA"/>
</dbReference>
<dbReference type="EMBL" id="AM260479">
    <property type="protein sequence ID" value="CAJ94204.1"/>
    <property type="molecule type" value="Genomic_DNA"/>
</dbReference>
<dbReference type="RefSeq" id="WP_010815077.1">
    <property type="nucleotide sequence ID" value="NZ_CP039287.1"/>
</dbReference>
<dbReference type="SMR" id="Q9ZHI5"/>
<dbReference type="STRING" id="381666.H16_A3129"/>
<dbReference type="KEGG" id="reh:H16_A3129"/>
<dbReference type="eggNOG" id="COG0853">
    <property type="taxonomic scope" value="Bacteria"/>
</dbReference>
<dbReference type="HOGENOM" id="CLU_115305_2_1_4"/>
<dbReference type="OrthoDB" id="9803983at2"/>
<dbReference type="UniPathway" id="UPA00028">
    <property type="reaction ID" value="UER00002"/>
</dbReference>
<dbReference type="Proteomes" id="UP000008210">
    <property type="component" value="Chromosome 1"/>
</dbReference>
<dbReference type="GO" id="GO:0005829">
    <property type="term" value="C:cytosol"/>
    <property type="evidence" value="ECO:0007669"/>
    <property type="project" value="TreeGrafter"/>
</dbReference>
<dbReference type="GO" id="GO:0004068">
    <property type="term" value="F:aspartate 1-decarboxylase activity"/>
    <property type="evidence" value="ECO:0007669"/>
    <property type="project" value="UniProtKB-UniRule"/>
</dbReference>
<dbReference type="GO" id="GO:0006523">
    <property type="term" value="P:alanine biosynthetic process"/>
    <property type="evidence" value="ECO:0007669"/>
    <property type="project" value="InterPro"/>
</dbReference>
<dbReference type="GO" id="GO:0015940">
    <property type="term" value="P:pantothenate biosynthetic process"/>
    <property type="evidence" value="ECO:0007669"/>
    <property type="project" value="UniProtKB-UniRule"/>
</dbReference>
<dbReference type="CDD" id="cd06919">
    <property type="entry name" value="Asp_decarbox"/>
    <property type="match status" value="1"/>
</dbReference>
<dbReference type="Gene3D" id="2.40.40.20">
    <property type="match status" value="1"/>
</dbReference>
<dbReference type="HAMAP" id="MF_00446">
    <property type="entry name" value="PanD"/>
    <property type="match status" value="1"/>
</dbReference>
<dbReference type="InterPro" id="IPR009010">
    <property type="entry name" value="Asp_de-COase-like_dom_sf"/>
</dbReference>
<dbReference type="InterPro" id="IPR003190">
    <property type="entry name" value="Asp_decarbox"/>
</dbReference>
<dbReference type="NCBIfam" id="TIGR00223">
    <property type="entry name" value="panD"/>
    <property type="match status" value="1"/>
</dbReference>
<dbReference type="PANTHER" id="PTHR21012">
    <property type="entry name" value="ASPARTATE 1-DECARBOXYLASE"/>
    <property type="match status" value="1"/>
</dbReference>
<dbReference type="PANTHER" id="PTHR21012:SF0">
    <property type="entry name" value="ASPARTATE 1-DECARBOXYLASE"/>
    <property type="match status" value="1"/>
</dbReference>
<dbReference type="Pfam" id="PF02261">
    <property type="entry name" value="Asp_decarbox"/>
    <property type="match status" value="1"/>
</dbReference>
<dbReference type="PIRSF" id="PIRSF006246">
    <property type="entry name" value="Asp_decarbox"/>
    <property type="match status" value="1"/>
</dbReference>
<dbReference type="SUPFAM" id="SSF50692">
    <property type="entry name" value="ADC-like"/>
    <property type="match status" value="1"/>
</dbReference>
<feature type="chain" id="PRO_0000023011" description="Aspartate 1-decarboxylase beta chain" evidence="1">
    <location>
        <begin position="1"/>
        <end position="24"/>
    </location>
</feature>
<feature type="chain" id="PRO_0000023012" description="Aspartate 1-decarboxylase alpha chain" evidence="1">
    <location>
        <begin position="25"/>
        <end position="120"/>
    </location>
</feature>
<feature type="active site" description="Schiff-base intermediate with substrate; via pyruvic acid" evidence="1">
    <location>
        <position position="25"/>
    </location>
</feature>
<feature type="active site" description="Proton donor" evidence="1">
    <location>
        <position position="58"/>
    </location>
</feature>
<feature type="binding site" evidence="1">
    <location>
        <position position="57"/>
    </location>
    <ligand>
        <name>substrate</name>
    </ligand>
</feature>
<feature type="binding site" evidence="1">
    <location>
        <begin position="73"/>
        <end position="75"/>
    </location>
    <ligand>
        <name>substrate</name>
    </ligand>
</feature>
<feature type="modified residue" description="Pyruvic acid (Ser)" evidence="1">
    <location>
        <position position="25"/>
    </location>
</feature>
<keyword id="KW-0068">Autocatalytic cleavage</keyword>
<keyword id="KW-0963">Cytoplasm</keyword>
<keyword id="KW-0210">Decarboxylase</keyword>
<keyword id="KW-0456">Lyase</keyword>
<keyword id="KW-0566">Pantothenate biosynthesis</keyword>
<keyword id="KW-0670">Pyruvate</keyword>
<keyword id="KW-1185">Reference proteome</keyword>
<keyword id="KW-0704">Schiff base</keyword>
<keyword id="KW-0865">Zymogen</keyword>
<protein>
    <recommendedName>
        <fullName evidence="1">Aspartate 1-decarboxylase</fullName>
        <ecNumber evidence="1">4.1.1.11</ecNumber>
    </recommendedName>
    <alternativeName>
        <fullName evidence="1">Aspartate alpha-decarboxylase</fullName>
    </alternativeName>
    <component>
        <recommendedName>
            <fullName evidence="1">Aspartate 1-decarboxylase beta chain</fullName>
        </recommendedName>
    </component>
    <component>
        <recommendedName>
            <fullName evidence="1">Aspartate 1-decarboxylase alpha chain</fullName>
        </recommendedName>
    </component>
</protein>
<evidence type="ECO:0000255" key="1">
    <source>
        <dbReference type="HAMAP-Rule" id="MF_00446"/>
    </source>
</evidence>